<protein>
    <recommendedName>
        <fullName>Protein FAM229B</fullName>
    </recommendedName>
</protein>
<accession>B0BND4</accession>
<comment type="similarity">
    <text evidence="2">Belongs to the FAM229 family.</text>
</comment>
<gene>
    <name type="primary">Fam229b</name>
</gene>
<organism>
    <name type="scientific">Rattus norvegicus</name>
    <name type="common">Rat</name>
    <dbReference type="NCBI Taxonomy" id="10116"/>
    <lineage>
        <taxon>Eukaryota</taxon>
        <taxon>Metazoa</taxon>
        <taxon>Chordata</taxon>
        <taxon>Craniata</taxon>
        <taxon>Vertebrata</taxon>
        <taxon>Euteleostomi</taxon>
        <taxon>Mammalia</taxon>
        <taxon>Eutheria</taxon>
        <taxon>Euarchontoglires</taxon>
        <taxon>Glires</taxon>
        <taxon>Rodentia</taxon>
        <taxon>Myomorpha</taxon>
        <taxon>Muroidea</taxon>
        <taxon>Muridae</taxon>
        <taxon>Murinae</taxon>
        <taxon>Rattus</taxon>
    </lineage>
</organism>
<proteinExistence type="inferred from homology"/>
<keyword id="KW-1185">Reference proteome</keyword>
<feature type="chain" id="PRO_0000335819" description="Protein FAM229B">
    <location>
        <begin position="1"/>
        <end position="80"/>
    </location>
</feature>
<feature type="region of interest" description="Disordered" evidence="1">
    <location>
        <begin position="1"/>
        <end position="45"/>
    </location>
</feature>
<feature type="compositionally biased region" description="Low complexity" evidence="1">
    <location>
        <begin position="15"/>
        <end position="32"/>
    </location>
</feature>
<feature type="compositionally biased region" description="Polar residues" evidence="1">
    <location>
        <begin position="33"/>
        <end position="42"/>
    </location>
</feature>
<dbReference type="EMBL" id="BC158777">
    <property type="protein sequence ID" value="AAI58778.1"/>
    <property type="molecule type" value="mRNA"/>
</dbReference>
<dbReference type="RefSeq" id="NP_001128167.1">
    <property type="nucleotide sequence ID" value="NM_001134695.1"/>
</dbReference>
<dbReference type="RefSeq" id="XP_006256581.1">
    <property type="nucleotide sequence ID" value="XM_006256519.3"/>
</dbReference>
<dbReference type="RefSeq" id="XP_038954280.1">
    <property type="nucleotide sequence ID" value="XM_039098352.2"/>
</dbReference>
<dbReference type="RefSeq" id="XP_038954284.1">
    <property type="nucleotide sequence ID" value="XM_039098356.2"/>
</dbReference>
<dbReference type="RefSeq" id="XP_063134974.1">
    <property type="nucleotide sequence ID" value="XM_063278904.1"/>
</dbReference>
<dbReference type="RefSeq" id="XP_063134975.1">
    <property type="nucleotide sequence ID" value="XM_063278905.1"/>
</dbReference>
<dbReference type="RefSeq" id="XP_063134976.1">
    <property type="nucleotide sequence ID" value="XM_063278906.1"/>
</dbReference>
<dbReference type="FunCoup" id="B0BND4">
    <property type="interactions" value="227"/>
</dbReference>
<dbReference type="STRING" id="10116.ENSRNOP00000038054"/>
<dbReference type="PhosphoSitePlus" id="B0BND4"/>
<dbReference type="PaxDb" id="10116-ENSRNOP00000038054"/>
<dbReference type="Ensembl" id="ENSRNOT00000036853.3">
    <property type="protein sequence ID" value="ENSRNOP00000038054.2"/>
    <property type="gene ID" value="ENSRNOG00000024918.3"/>
</dbReference>
<dbReference type="GeneID" id="100188933"/>
<dbReference type="KEGG" id="rno:100188933"/>
<dbReference type="UCSC" id="RGD:2300149">
    <property type="organism name" value="rat"/>
</dbReference>
<dbReference type="AGR" id="RGD:2300149"/>
<dbReference type="CTD" id="619208"/>
<dbReference type="RGD" id="2300149">
    <property type="gene designation" value="Fam229b"/>
</dbReference>
<dbReference type="eggNOG" id="ENOG502TEG8">
    <property type="taxonomic scope" value="Eukaryota"/>
</dbReference>
<dbReference type="GeneTree" id="ENSGT00390000017996"/>
<dbReference type="HOGENOM" id="CLU_2589122_0_0_1"/>
<dbReference type="InParanoid" id="B0BND4"/>
<dbReference type="OMA" id="ACNGKET"/>
<dbReference type="OrthoDB" id="9818842at2759"/>
<dbReference type="PhylomeDB" id="B0BND4"/>
<dbReference type="TreeFam" id="TF339579"/>
<dbReference type="PRO" id="PR:B0BND4"/>
<dbReference type="Proteomes" id="UP000002494">
    <property type="component" value="Chromosome 20"/>
</dbReference>
<dbReference type="Bgee" id="ENSRNOG00000024918">
    <property type="expression patterns" value="Expressed in testis and 17 other cell types or tissues"/>
</dbReference>
<dbReference type="InterPro" id="IPR028025">
    <property type="entry name" value="FAM229"/>
</dbReference>
<dbReference type="PANTHER" id="PTHR35355">
    <property type="entry name" value="PROTEIN FAM229A"/>
    <property type="match status" value="1"/>
</dbReference>
<dbReference type="PANTHER" id="PTHR35355:SF2">
    <property type="entry name" value="PROTEIN FAM229B"/>
    <property type="match status" value="1"/>
</dbReference>
<dbReference type="Pfam" id="PF14982">
    <property type="entry name" value="UPF0731"/>
    <property type="match status" value="1"/>
</dbReference>
<sequence>MPFRFGTQPRRFPVEGGDSSIELESGLSSSASCNGKETSPNRQLRRCPGSHCLTITDVPITVYATMRKPPAQSSKEMRPK</sequence>
<evidence type="ECO:0000256" key="1">
    <source>
        <dbReference type="SAM" id="MobiDB-lite"/>
    </source>
</evidence>
<evidence type="ECO:0000305" key="2"/>
<name>F229B_RAT</name>
<reference key="1">
    <citation type="journal article" date="2004" name="Genome Res.">
        <title>The status, quality, and expansion of the NIH full-length cDNA project: the Mammalian Gene Collection (MGC).</title>
        <authorList>
            <consortium name="The MGC Project Team"/>
        </authorList>
    </citation>
    <scope>NUCLEOTIDE SEQUENCE [LARGE SCALE MRNA]</scope>
    <source>
        <tissue>Testis</tissue>
    </source>
</reference>